<comment type="function">
    <text evidence="8">Probable FAD-dependent oxidoreductase that plays a role in the regulation of fruiting body development.</text>
</comment>
<comment type="subcellular location">
    <subcellularLocation>
        <location evidence="4">Membrane</location>
        <topology evidence="4">Single-pass membrane protein</topology>
    </subcellularLocation>
</comment>
<comment type="induction">
    <text evidence="5">Expression is positively regulated by the cross-pathway control WD-repeat protein 2 (CPC2) during fruiting body development.</text>
</comment>
<comment type="similarity">
    <text evidence="7">Belongs to the FAD-dependent oxidoreductase family.</text>
</comment>
<protein>
    <recommendedName>
        <fullName evidence="7">FAD-dependent oxidoreductase FVFD30</fullName>
        <ecNumber evidence="3">1.6.5.-</ecNumber>
    </recommendedName>
    <alternativeName>
        <fullName evidence="6">Fruiting body differentiation protein 30</fullName>
    </alternativeName>
</protein>
<proteinExistence type="evidence at transcript level"/>
<reference key="1">
    <citation type="submission" date="1996-11" db="EMBL/GenBank/DDBJ databases">
        <title>Cloning and sequence analysis of a cDNA for the gene FVFD 30, specifically expressed during fruiting body development in Flammulina velutipes.</title>
        <authorList>
            <person name="Kim D."/>
            <person name="Azuma T."/>
            <person name="Harada A."/>
            <person name="Sakuma Y."/>
            <person name="Ando A."/>
            <person name="Tamai Y."/>
            <person name="Miura K."/>
        </authorList>
    </citation>
    <scope>NUCLEOTIDE SEQUENCE [MRNA]</scope>
    <source>
        <strain>Fv-4</strain>
    </source>
</reference>
<reference key="2">
    <citation type="journal article" date="2020" name="Front. Microbiol.">
        <title>A WD40 Protein Encoding Gene Fvcpc2 Positively Regulates Mushroom Development and Yield in Flammulina velutipes.</title>
        <authorList>
            <person name="Wu T."/>
            <person name="Zhang Z."/>
            <person name="Hu C."/>
            <person name="Zhang L."/>
            <person name="Wei S."/>
            <person name="Li S."/>
        </authorList>
    </citation>
    <scope>INDUCTION</scope>
    <scope>FUNCTION</scope>
</reference>
<feature type="chain" id="PRO_0000462488" description="FAD-dependent oxidoreductase FVFD30">
    <location>
        <begin position="1"/>
        <end position="319"/>
    </location>
</feature>
<feature type="transmembrane region" description="Helical" evidence="4">
    <location>
        <begin position="281"/>
        <end position="301"/>
    </location>
</feature>
<feature type="binding site" evidence="1">
    <location>
        <position position="6"/>
    </location>
    <ligand>
        <name>FAD</name>
        <dbReference type="ChEBI" id="CHEBI:57692"/>
    </ligand>
</feature>
<feature type="binding site" evidence="1">
    <location>
        <position position="18"/>
    </location>
    <ligand>
        <name>FAD</name>
        <dbReference type="ChEBI" id="CHEBI:57692"/>
    </ligand>
</feature>
<feature type="binding site" evidence="1">
    <location>
        <position position="25"/>
    </location>
    <ligand>
        <name>FAD</name>
        <dbReference type="ChEBI" id="CHEBI:57692"/>
    </ligand>
</feature>
<feature type="binding site" evidence="1">
    <location>
        <position position="129"/>
    </location>
    <ligand>
        <name>NAD(+)</name>
        <dbReference type="ChEBI" id="CHEBI:57540"/>
    </ligand>
</feature>
<feature type="binding site" evidence="1">
    <location>
        <position position="129"/>
    </location>
    <ligand>
        <name>NADP(+)</name>
        <dbReference type="ChEBI" id="CHEBI:58349"/>
    </ligand>
</feature>
<feature type="binding site" evidence="1">
    <location>
        <position position="188"/>
    </location>
    <ligand>
        <name>NAD(+)</name>
        <dbReference type="ChEBI" id="CHEBI:57540"/>
    </ligand>
</feature>
<feature type="binding site" evidence="1">
    <location>
        <position position="188"/>
    </location>
    <ligand>
        <name>NADP(+)</name>
        <dbReference type="ChEBI" id="CHEBI:58349"/>
    </ligand>
</feature>
<feature type="binding site" evidence="4">
    <location>
        <position position="228"/>
    </location>
    <ligand>
        <name>6-hydroxy-FAD</name>
        <dbReference type="ChEBI" id="CHEBI:60470"/>
    </ligand>
</feature>
<feature type="binding site" evidence="1">
    <location>
        <position position="228"/>
    </location>
    <ligand>
        <name>FAD</name>
        <dbReference type="ChEBI" id="CHEBI:57692"/>
    </ligand>
</feature>
<feature type="binding site" evidence="1">
    <location>
        <position position="265"/>
    </location>
    <ligand>
        <name>FAD</name>
        <dbReference type="ChEBI" id="CHEBI:57692"/>
    </ligand>
</feature>
<feature type="binding site" evidence="1">
    <location>
        <position position="265"/>
    </location>
    <ligand>
        <name>NAD(+)</name>
        <dbReference type="ChEBI" id="CHEBI:57540"/>
    </ligand>
</feature>
<feature type="binding site" evidence="1">
    <location>
        <position position="265"/>
    </location>
    <ligand>
        <name>NADP(+)</name>
        <dbReference type="ChEBI" id="CHEBI:58349"/>
    </ligand>
</feature>
<feature type="site" description="4-hydroxy-2-nonenal adduction" evidence="2">
    <location>
        <position position="125"/>
    </location>
</feature>
<gene>
    <name evidence="6" type="primary">FVFD30</name>
</gene>
<name>FD30_FLAVE</name>
<sequence length="319" mass="34593">MLVSDRDKLEDKALIPLDNIFHNGKGTLVQASVTSVEKEKTGGFVVLDNGEKLPFYVLVVATGSKWSGPVDFPSKPEDVTKWISEQRKKFKDAKNIVIAGGGSVGLELSGEIKDIWPEKSVTIVHSQKKLLNSVYPDKFRDRAAQAYRPRTKLVLDDQIPGELTPGATSVTTRNGKTITADLIVPAWGNKPNTALLSSLKDVLSPNGCVKIRDTFQTQAYPDIFALGDIIDVNEQKQAGKAQAHAGMVAANVLSYVQGQPLKQKYKGSYELIVITNGKNDGVGYFGVWWGIVIGGWLASLLKAKDLMLPATRVATGASK</sequence>
<accession>Q2RBS5</accession>
<evidence type="ECO:0000250" key="1">
    <source>
        <dbReference type="UniProtKB" id="Q652L6"/>
    </source>
</evidence>
<evidence type="ECO:0000250" key="2">
    <source>
        <dbReference type="UniProtKB" id="Q8BUE4"/>
    </source>
</evidence>
<evidence type="ECO:0000250" key="3">
    <source>
        <dbReference type="UniProtKB" id="Q9BRQ8"/>
    </source>
</evidence>
<evidence type="ECO:0000255" key="4"/>
<evidence type="ECO:0000269" key="5">
    <source>
    </source>
</evidence>
<evidence type="ECO:0000303" key="6">
    <source>
    </source>
</evidence>
<evidence type="ECO:0000305" key="7"/>
<evidence type="ECO:0000305" key="8">
    <source>
    </source>
</evidence>
<organism>
    <name type="scientific">Flammulina velutipes</name>
    <name type="common">Agaricus velutipes</name>
    <dbReference type="NCBI Taxonomy" id="38945"/>
    <lineage>
        <taxon>Eukaryota</taxon>
        <taxon>Fungi</taxon>
        <taxon>Dikarya</taxon>
        <taxon>Basidiomycota</taxon>
        <taxon>Agaricomycotina</taxon>
        <taxon>Agaricomycetes</taxon>
        <taxon>Agaricomycetidae</taxon>
        <taxon>Agaricales</taxon>
        <taxon>Marasmiineae</taxon>
        <taxon>Physalacriaceae</taxon>
        <taxon>Flammulina</taxon>
    </lineage>
</organism>
<keyword id="KW-0274">FAD</keyword>
<keyword id="KW-0285">Flavoprotein</keyword>
<keyword id="KW-0472">Membrane</keyword>
<keyword id="KW-0520">NAD</keyword>
<keyword id="KW-0521">NADP</keyword>
<keyword id="KW-0560">Oxidoreductase</keyword>
<keyword id="KW-0812">Transmembrane</keyword>
<keyword id="KW-1133">Transmembrane helix</keyword>
<dbReference type="EC" id="1.6.5.-" evidence="3"/>
<dbReference type="EMBL" id="D88900">
    <property type="protein sequence ID" value="BAE66642.1"/>
    <property type="molecule type" value="mRNA"/>
</dbReference>
<dbReference type="GO" id="GO:0005737">
    <property type="term" value="C:cytoplasm"/>
    <property type="evidence" value="ECO:0007669"/>
    <property type="project" value="TreeGrafter"/>
</dbReference>
<dbReference type="GO" id="GO:0004174">
    <property type="term" value="F:electron-transferring-flavoprotein dehydrogenase activity"/>
    <property type="evidence" value="ECO:0007669"/>
    <property type="project" value="TreeGrafter"/>
</dbReference>
<dbReference type="GO" id="GO:0050660">
    <property type="term" value="F:flavin adenine dinucleotide binding"/>
    <property type="evidence" value="ECO:0007669"/>
    <property type="project" value="TreeGrafter"/>
</dbReference>
<dbReference type="Gene3D" id="3.50.50.100">
    <property type="match status" value="1"/>
</dbReference>
<dbReference type="InterPro" id="IPR036188">
    <property type="entry name" value="FAD/NAD-bd_sf"/>
</dbReference>
<dbReference type="InterPro" id="IPR023753">
    <property type="entry name" value="FAD/NAD-binding_dom"/>
</dbReference>
<dbReference type="PANTHER" id="PTHR43735">
    <property type="entry name" value="APOPTOSIS-INDUCING FACTOR 1"/>
    <property type="match status" value="1"/>
</dbReference>
<dbReference type="PANTHER" id="PTHR43735:SF3">
    <property type="entry name" value="FERROPTOSIS SUPPRESSOR PROTEIN 1"/>
    <property type="match status" value="1"/>
</dbReference>
<dbReference type="Pfam" id="PF07992">
    <property type="entry name" value="Pyr_redox_2"/>
    <property type="match status" value="1"/>
</dbReference>
<dbReference type="PRINTS" id="PR00368">
    <property type="entry name" value="FADPNR"/>
</dbReference>
<dbReference type="PRINTS" id="PR00411">
    <property type="entry name" value="PNDRDTASEI"/>
</dbReference>
<dbReference type="SUPFAM" id="SSF51905">
    <property type="entry name" value="FAD/NAD(P)-binding domain"/>
    <property type="match status" value="1"/>
</dbReference>